<keyword id="KW-0002">3D-structure</keyword>
<keyword id="KW-0051">Antiviral defense</keyword>
<keyword id="KW-0963">Cytoplasm</keyword>
<keyword id="KW-1185">Reference proteome</keyword>
<keyword id="KW-0694">RNA-binding</keyword>
<feature type="chain" id="PRO_0000418081" description="CRISPR system Cmr subunit Cmr6">
    <location>
        <begin position="1"/>
        <end position="340"/>
    </location>
</feature>
<feature type="strand" evidence="6">
    <location>
        <begin position="107"/>
        <end position="117"/>
    </location>
</feature>
<feature type="strand" evidence="6">
    <location>
        <begin position="119"/>
        <end position="122"/>
    </location>
</feature>
<feature type="helix" evidence="6">
    <location>
        <begin position="128"/>
        <end position="136"/>
    </location>
</feature>
<feature type="helix" evidence="6">
    <location>
        <begin position="146"/>
        <end position="162"/>
    </location>
</feature>
<feature type="helix" evidence="6">
    <location>
        <begin position="171"/>
        <end position="184"/>
    </location>
</feature>
<feature type="helix" evidence="6">
    <location>
        <begin position="187"/>
        <end position="190"/>
    </location>
</feature>
<feature type="turn" evidence="6">
    <location>
        <begin position="191"/>
        <end position="193"/>
    </location>
</feature>
<feature type="helix" evidence="6">
    <location>
        <begin position="202"/>
        <end position="210"/>
    </location>
</feature>
<feature type="turn" evidence="6">
    <location>
        <begin position="211"/>
        <end position="213"/>
    </location>
</feature>
<feature type="helix" evidence="6">
    <location>
        <begin position="216"/>
        <end position="227"/>
    </location>
</feature>
<feature type="strand" evidence="6">
    <location>
        <begin position="230"/>
        <end position="232"/>
    </location>
</feature>
<feature type="strand" evidence="6">
    <location>
        <begin position="235"/>
        <end position="238"/>
    </location>
</feature>
<feature type="strand" evidence="6">
    <location>
        <begin position="241"/>
        <end position="243"/>
    </location>
</feature>
<feature type="helix" evidence="6">
    <location>
        <begin position="245"/>
        <end position="247"/>
    </location>
</feature>
<feature type="strand" evidence="6">
    <location>
        <begin position="255"/>
        <end position="264"/>
    </location>
</feature>
<feature type="strand" evidence="6">
    <location>
        <begin position="286"/>
        <end position="291"/>
    </location>
</feature>
<feature type="strand" evidence="6">
    <location>
        <begin position="296"/>
        <end position="304"/>
    </location>
</feature>
<feature type="helix" evidence="6">
    <location>
        <begin position="306"/>
        <end position="322"/>
    </location>
</feature>
<feature type="strand" evidence="6">
    <location>
        <begin position="325"/>
        <end position="327"/>
    </location>
</feature>
<feature type="helix" evidence="6">
    <location>
        <begin position="329"/>
        <end position="331"/>
    </location>
</feature>
<feature type="turn" evidence="6">
    <location>
        <begin position="332"/>
        <end position="334"/>
    </location>
</feature>
<feature type="strand" evidence="6">
    <location>
        <begin position="336"/>
        <end position="338"/>
    </location>
</feature>
<name>CMR6_PYRFU</name>
<gene>
    <name evidence="4" type="primary">cmr6</name>
    <name type="ordered locus">PF1124</name>
</gene>
<proteinExistence type="evidence at protein level"/>
<evidence type="ECO:0000269" key="1">
    <source>
    </source>
</evidence>
<evidence type="ECO:0000269" key="2">
    <source>
    </source>
</evidence>
<evidence type="ECO:0000269" key="3">
    <source>
    </source>
</evidence>
<evidence type="ECO:0000303" key="4">
    <source>
    </source>
</evidence>
<evidence type="ECO:0000305" key="5"/>
<evidence type="ECO:0007829" key="6">
    <source>
        <dbReference type="PDB" id="4W8V"/>
    </source>
</evidence>
<accession>Q8U1T1</accession>
<organism>
    <name type="scientific">Pyrococcus furiosus (strain ATCC 43587 / DSM 3638 / JCM 8422 / Vc1)</name>
    <dbReference type="NCBI Taxonomy" id="186497"/>
    <lineage>
        <taxon>Archaea</taxon>
        <taxon>Methanobacteriati</taxon>
        <taxon>Methanobacteriota</taxon>
        <taxon>Thermococci</taxon>
        <taxon>Thermococcales</taxon>
        <taxon>Thermococcaceae</taxon>
        <taxon>Pyrococcus</taxon>
    </lineage>
</organism>
<sequence>MKEVVKLVLLGERQNSLNLSLYFNKYPPTIIYPEVLEDRNKKLASPSGSQRKISLLVLNQGVLQFNKIKETIEKSLPIETKVKLPQKAYELYKKYYQDYTDMLNSLHAITGKFKTQSRLVVGLGDESVYETSIRLLRNYGVPYIPGSAIKGVTRHLTYYVLAEFINEGNDFYKRAKTVQDAFMKGDPKEILSNAKVPERCSRLCKEFLRIFGEKKVPEIIDELIRIFGTQKKEGEVVFFDAIPIAEEIADKPILELDIMNPHYGPYYQSGEKNVPPPGDWYDPIPIFFLTVPKDVPFLVAVGGRDRELTEKAFSLVKLALRDLGVGAKTSLGYGRLVEYV</sequence>
<protein>
    <recommendedName>
        <fullName>CRISPR system Cmr subunit Cmr6</fullName>
    </recommendedName>
    <alternativeName>
        <fullName>CRISPR type III-B/RAMP module RAMP protein Cmr6</fullName>
    </alternativeName>
</protein>
<dbReference type="EMBL" id="AE009950">
    <property type="protein sequence ID" value="AAL81248.1"/>
    <property type="molecule type" value="Genomic_DNA"/>
</dbReference>
<dbReference type="RefSeq" id="WP_011012264.1">
    <property type="nucleotide sequence ID" value="NZ_CP023154.1"/>
</dbReference>
<dbReference type="PDB" id="4W8V">
    <property type="method" value="X-ray"/>
    <property type="resolution" value="2.15 A"/>
    <property type="chains" value="A/B=101-340"/>
</dbReference>
<dbReference type="PDBsum" id="4W8V"/>
<dbReference type="EMDB" id="EMD-5740"/>
<dbReference type="SMR" id="Q8U1T1"/>
<dbReference type="DIP" id="DIP-54368N"/>
<dbReference type="IntAct" id="Q8U1T1">
    <property type="interactions" value="3"/>
</dbReference>
<dbReference type="STRING" id="186497.PF1124"/>
<dbReference type="PaxDb" id="186497-PF1124"/>
<dbReference type="DNASU" id="1468993"/>
<dbReference type="GeneID" id="41712933"/>
<dbReference type="KEGG" id="pfu:PF1124"/>
<dbReference type="PATRIC" id="fig|186497.12.peg.1185"/>
<dbReference type="eggNOG" id="arCOG02661">
    <property type="taxonomic scope" value="Archaea"/>
</dbReference>
<dbReference type="HOGENOM" id="CLU_053305_2_1_2"/>
<dbReference type="OrthoDB" id="86328at2157"/>
<dbReference type="PhylomeDB" id="Q8U1T1"/>
<dbReference type="EvolutionaryTrace" id="Q8U1T1"/>
<dbReference type="Proteomes" id="UP000001013">
    <property type="component" value="Chromosome"/>
</dbReference>
<dbReference type="GO" id="GO:0005737">
    <property type="term" value="C:cytoplasm"/>
    <property type="evidence" value="ECO:0007669"/>
    <property type="project" value="UniProtKB-SubCell"/>
</dbReference>
<dbReference type="GO" id="GO:0003723">
    <property type="term" value="F:RNA binding"/>
    <property type="evidence" value="ECO:0007669"/>
    <property type="project" value="UniProtKB-KW"/>
</dbReference>
<dbReference type="GO" id="GO:0051607">
    <property type="term" value="P:defense response to virus"/>
    <property type="evidence" value="ECO:0007669"/>
    <property type="project" value="UniProtKB-KW"/>
</dbReference>
<dbReference type="CDD" id="cd09661">
    <property type="entry name" value="Cmr6_III-B"/>
    <property type="match status" value="1"/>
</dbReference>
<dbReference type="InterPro" id="IPR010172">
    <property type="entry name" value="CRISPR-assoc_prot_TM1791"/>
</dbReference>
<dbReference type="InterPro" id="IPR005537">
    <property type="entry name" value="RAMP_III_fam"/>
</dbReference>
<dbReference type="NCBIfam" id="TIGR01898">
    <property type="entry name" value="cas_TM1791_cmr6"/>
    <property type="match status" value="1"/>
</dbReference>
<dbReference type="PANTHER" id="PTHR39965">
    <property type="entry name" value="CRISPR SYSTEM CMR SUBUNIT CMR6"/>
    <property type="match status" value="1"/>
</dbReference>
<dbReference type="PANTHER" id="PTHR39965:SF1">
    <property type="entry name" value="CRISPR SYSTEM CMR SUBUNIT CMR6"/>
    <property type="match status" value="1"/>
</dbReference>
<dbReference type="Pfam" id="PF03787">
    <property type="entry name" value="RAMPs"/>
    <property type="match status" value="1"/>
</dbReference>
<reference key="1">
    <citation type="journal article" date="1999" name="Genetics">
        <title>Divergence of the hyperthermophilic archaea Pyrococcus furiosus and P. horikoshii inferred from complete genomic sequences.</title>
        <authorList>
            <person name="Maeder D.L."/>
            <person name="Weiss R.B."/>
            <person name="Dunn D.M."/>
            <person name="Cherry J.L."/>
            <person name="Gonzalez J.M."/>
            <person name="DiRuggiero J."/>
            <person name="Robb F.T."/>
        </authorList>
    </citation>
    <scope>NUCLEOTIDE SEQUENCE [LARGE SCALE GENOMIC DNA]</scope>
    <source>
        <strain>ATCC 43587 / DSM 3638 / JCM 8422 / Vc1</strain>
    </source>
</reference>
<reference key="2">
    <citation type="journal article" date="2009" name="Cell">
        <title>RNA-guided RNA cleavage by a CRISPR RNA-Cas protein complex.</title>
        <authorList>
            <person name="Hale C.R."/>
            <person name="Zhao P."/>
            <person name="Olson S."/>
            <person name="Duff M.O."/>
            <person name="Graveley B.R."/>
            <person name="Wells L."/>
            <person name="Terns R.M."/>
            <person name="Terns M.P."/>
        </authorList>
    </citation>
    <scope>IDENTIFICATION BY MASS SPECTROMETRY</scope>
    <scope>FUNCTION IN CMR COMPLEX</scope>
    <scope>SUBCELLULAR LOCATION</scope>
    <scope>SUBUNIT</scope>
    <source>
        <strain>ATCC 43587 / DSM 3638 / JCM 8422 / Vc1</strain>
    </source>
</reference>
<reference key="3">
    <citation type="journal article" date="2013" name="Mol. Cell">
        <title>Structure of an RNA silencing complex of the CRISPR-Cas immune system.</title>
        <authorList>
            <person name="Spilman M."/>
            <person name="Cocozaki A."/>
            <person name="Hale C."/>
            <person name="Shao Y."/>
            <person name="Ramia N."/>
            <person name="Terns R."/>
            <person name="Terns M."/>
            <person name="Li H."/>
            <person name="Stagg S."/>
        </authorList>
    </citation>
    <scope>STRUCTURE BY ELECTRON MICROSCOPY (12.0 ANGSTROMS) OF WHOLE CMR COMPLEX WITH TARGET RNA</scope>
    <scope>SUBUNIT</scope>
    <scope>RNA-BINDING</scope>
    <source>
        <strain>ATCC 43587 / DSM 3638 / JCM 8422 / Vc1</strain>
    </source>
</reference>
<reference key="4">
    <citation type="journal article" date="2014" name="Mol. Cell">
        <title>Structural model of a CRISPR RNA-silencing complex reveals the RNA-target cleavage activity in Cmr4.</title>
        <authorList>
            <person name="Benda C."/>
            <person name="Ebert J."/>
            <person name="Scheltema R.A."/>
            <person name="Schiller H.B."/>
            <person name="Baumgaertner M."/>
            <person name="Bonneau F."/>
            <person name="Mann M."/>
            <person name="Conti E."/>
        </authorList>
    </citation>
    <scope>X-RAY CRYSTALLOGRAPHY (2.15 ANGSTROMS) OF 101-340</scope>
    <scope>FUNCTION</scope>
    <scope>INTERACTION WITH CMR4 AND CMR5</scope>
    <scope>SUBUNIT</scope>
    <source>
        <strain>ATCC 43587 / DSM 3638 / JCM 8422 / Vc1</strain>
    </source>
</reference>
<comment type="function">
    <text evidence="1 3">CRISPR (clustered regularly interspaced short palindromic repeat), is an adaptive immune system that provides protection against mobile genetic elements (viruses, transposable elements and conjugative plasmids). CRISPR clusters contain sequences complementary to antecedent mobile elements and target invading nucleic acids. CRISPR clusters are transcribed and processed into CRISPR RNA (crRNA), formerly called psiRNA (prokaryotic silencing) in this organism. Part of the Cmr ribonucleoprotein complex which has divalent cation-dependent endoribonuclease activity specific for ssRNA complementary to the crRNA (target RNA), generating 5' hydroxy- and 3' phosphate or 2'-3' cyclic phosphate termini. Cmr4 is probably the subunit that cleaves target RNA (PubMed:25280103). Cmr complex does not cleave ssDNA complementary to the crRNA. Cleavage of invading RNA is guided by the crRNA; substrate cleavage occurs a fixed distance (14 nt) from the 3' end of the crRNA. In vitro reconstitution shows Cmr1-2 and Cmr5 are not absolutely necessary for target cleavage (PubMed:19945378).</text>
</comment>
<comment type="subunit">
    <text evidence="1 2 3">Part of the type III-B Cmr ribonucleoprotein (RNP) complex, an elongated RNP with Cmr2 and Cmr3 as the base, with Cmr4 and Cmr5 forming a helical core along the mature crRNA (39 or 45 nt in length), while the complex is capped by Cmr6 and Cmr1. The 5' end of the crRNA is bound to Cmr2 and Cmr3, while Cmr6 and a Cmr1 subunit (Cmr1-1 or Cmr1-2) cap the 3' end of the crRNA. The target RNA lies antiparallel to the crRNA, with its 5' end near Cmr1 and Cmr6 and its 3' end near Cmr2 and Cmr3; major target cleavage occurs nears the junction of Cmr1/Cmr6 and Cmr4/Cmr, with minor cleavage occurring at 6 nt intervals which coincide with the proposed spacing of Cmr4 subunits (PubMed:24119404, PubMed:25280103). Interacts with Cmr4 and Cmr5 (PubMed:25280103).</text>
</comment>
<comment type="subcellular location">
    <subcellularLocation>
        <location evidence="1">Cytoplasm</location>
    </subcellularLocation>
</comment>
<comment type="similarity">
    <text evidence="5">Belongs to the CRISPR system Cmr6 family.</text>
</comment>